<organism>
    <name type="scientific">Homo sapiens</name>
    <name type="common">Human</name>
    <dbReference type="NCBI Taxonomy" id="9606"/>
    <lineage>
        <taxon>Eukaryota</taxon>
        <taxon>Metazoa</taxon>
        <taxon>Chordata</taxon>
        <taxon>Craniata</taxon>
        <taxon>Vertebrata</taxon>
        <taxon>Euteleostomi</taxon>
        <taxon>Mammalia</taxon>
        <taxon>Eutheria</taxon>
        <taxon>Euarchontoglires</taxon>
        <taxon>Primates</taxon>
        <taxon>Haplorrhini</taxon>
        <taxon>Catarrhini</taxon>
        <taxon>Hominidae</taxon>
        <taxon>Homo</taxon>
    </lineage>
</organism>
<comment type="function">
    <text evidence="3 4 13 15 16">The small GTPases Rab are key regulators of intracellular membrane trafficking, from the formation of transport vesicles to their fusion with membranes. Rabs cycle between an inactive GDP-bound form and an active GTP-bound form that is able to recruit to membranes different sets of downstream effectors directly responsible for vesicle formation, movement, tethering and fusion (PubMed:18804435, PubMed:25648148, PubMed:31455601). RAB21 is involved in membrane trafficking control (PubMed:18804435, PubMed:25648148). During the mitosis of adherent cells, controls the endosomal trafficking of integrins which is required for the successful completion of cytokinesis (PubMed:18804435). Regulates integrin internalization and recycling, but does not influence the traffic of endosomally translocated receptors in general (By similarity). As a result, may regulate cell adhesion and migration (By similarity). Involved in neurite growth (By similarity). Following SBF2/MTMT13-mediated activation in response to starvation-induced autophagy, binds to and regulates SNARE protein VAMP8 endolysosomal transport required for SNARE-mediated autophagosome-lysosome fusion (PubMed:25648148). Modulates protein levels of the cargo receptors TMED2 and TMED10, and required for appropriate Golgi localization of TMED10 (PubMed:31455601).</text>
</comment>
<comment type="catalytic activity">
    <reaction evidence="2">
        <text>GTP + H2O = GDP + phosphate + H(+)</text>
        <dbReference type="Rhea" id="RHEA:19669"/>
        <dbReference type="ChEBI" id="CHEBI:15377"/>
        <dbReference type="ChEBI" id="CHEBI:15378"/>
        <dbReference type="ChEBI" id="CHEBI:37565"/>
        <dbReference type="ChEBI" id="CHEBI:43474"/>
        <dbReference type="ChEBI" id="CHEBI:58189"/>
        <dbReference type="EC" id="3.6.5.2"/>
    </reaction>
    <physiologicalReaction direction="left-to-right" evidence="2">
        <dbReference type="Rhea" id="RHEA:19670"/>
    </physiologicalReaction>
</comment>
<comment type="cofactor">
    <cofactor evidence="10">
        <name>Mg(2+)</name>
        <dbReference type="ChEBI" id="CHEBI:18420"/>
    </cofactor>
</comment>
<comment type="activity regulation">
    <text evidence="10 11 18">Regulated by guanine nucleotide exchange factors (GEFs) including ANKRD27 and RABGEF1, which promote the exchange of bound GDP for free GTP (PubMed:16525121, PubMed:17450153). Regulated by GTPase activating proteins (GAPs) which increase the GTP hydrolysis activity (Probable). Inhibited by GDP dissociation inhibitors (GDIs) (Probable).</text>
</comment>
<comment type="subunit">
    <text evidence="3 10 11 12 15 16">Interacts with the cytoplasmic tail of integrins ITGA1, ITGA2, ITGA5, ITGA6, ITGA11 and ITGB1 (By similarity). Interacts with RABGEF1 (via VPS9 domain) (PubMed:17450153). Interacts with ANKRD27 (PubMed:16525121, PubMed:18477474). Interacts with VAMP7 (PubMed:25648148). Interacts (in GTP-bound form) with VAMP8 in response to starvation; the interaction probably regulates VAMP8 endolysosomal trafficking (PubMed:25648148). Interacts (active GTP-bound form) with TMED10; the interaction is indirect and regulates TMED10 abundance and localization at the Golgi (PubMed:31455601).</text>
</comment>
<comment type="interaction">
    <interactant intactId="EBI-1056039">
        <id>Q9UL25</id>
    </interactant>
    <interactant intactId="EBI-741243">
        <id>Q9UKG1</id>
        <label>APPL1</label>
    </interactant>
    <organismsDiffer>false</organismsDiffer>
    <experiments>10</experiments>
</comment>
<comment type="interaction">
    <interactant intactId="EBI-1056039">
        <id>Q9UL25</id>
    </interactant>
    <interactant intactId="EBI-6448458">
        <id>Q9UJ41-2</id>
        <label>RABGEF1</label>
    </interactant>
    <organismsDiffer>false</organismsDiffer>
    <experiments>2</experiments>
</comment>
<comment type="subcellular location">
    <subcellularLocation>
        <location evidence="7">Endoplasmic reticulum membrane</location>
        <topology evidence="18">Lipid-anchor</topology>
    </subcellularLocation>
    <subcellularLocation>
        <location evidence="14">Golgi apparatus</location>
        <location evidence="14">trans-Golgi network</location>
    </subcellularLocation>
    <subcellularLocation>
        <location evidence="18">Golgi apparatus membrane</location>
    </subcellularLocation>
    <subcellularLocation>
        <location evidence="10 15">Early endosome membrane</location>
    </subcellularLocation>
    <subcellularLocation>
        <location evidence="7">Cytoplasmic vesicle membrane</location>
    </subcellularLocation>
    <subcellularLocation>
        <location evidence="13">Cleavage furrow</location>
    </subcellularLocation>
    <subcellularLocation>
        <location evidence="3">Cell projection</location>
        <location evidence="3">Neuron projection</location>
    </subcellularLocation>
    <text evidence="3 7 13">Colocalizes with ANKRD27 and VAMP7 in neurites (By similarity). In nonpolarized epithelial Caco-2 cells, found in the endoplasmic reticulum; in polarized cells, observed in vesicles in the apical cytoplasm (PubMed:10887961). During mitosis, in mid-telophase, localized in the ingressing cleavage furrow (PubMed:18804435). In late telophase, detected at the opposite poles of the daughter cells, in vesicles at the base of lamellipodia formed by the separating daughter cells (PubMed:18804435).</text>
</comment>
<comment type="tissue specificity">
    <text evidence="7">Widely expressed. In jejunal tissue, predominantly expressed in the apical region of the epithelial cell layer of the villi, weak expression, if any, in the crypt epithelium. Capillary endothelium and some cell types in the lamina propria also show expression.</text>
</comment>
<comment type="domain">
    <text evidence="9">Switch 1, switch 2 and the interswitch regions are characteristic of Rab GTPases and mediate the interactions with Rab downstream effectors. The switch regions undergo conformational changes upon nucleotide binding which drive interaction with specific sets of effector proteins, with most effectors only binding to GTP-bound Rab.</text>
</comment>
<comment type="similarity">
    <text evidence="18">Belongs to the small GTPase superfamily. Rab family.</text>
</comment>
<proteinExistence type="evidence at protein level"/>
<gene>
    <name evidence="20" type="primary">RAB21</name>
    <name type="synonym">KIAA0118</name>
</gene>
<name>RAB21_HUMAN</name>
<evidence type="ECO:0000250" key="1"/>
<evidence type="ECO:0000250" key="2">
    <source>
        <dbReference type="UniProtKB" id="P20339"/>
    </source>
</evidence>
<evidence type="ECO:0000250" key="3">
    <source>
        <dbReference type="UniProtKB" id="P35282"/>
    </source>
</evidence>
<evidence type="ECO:0000250" key="4">
    <source>
        <dbReference type="UniProtKB" id="Q6AXT5"/>
    </source>
</evidence>
<evidence type="ECO:0000255" key="5"/>
<evidence type="ECO:0000256" key="6">
    <source>
        <dbReference type="SAM" id="MobiDB-lite"/>
    </source>
</evidence>
<evidence type="ECO:0000269" key="7">
    <source>
    </source>
</evidence>
<evidence type="ECO:0000269" key="8">
    <source>
    </source>
</evidence>
<evidence type="ECO:0000269" key="9">
    <source>
    </source>
</evidence>
<evidence type="ECO:0000269" key="10">
    <source>
    </source>
</evidence>
<evidence type="ECO:0000269" key="11">
    <source>
    </source>
</evidence>
<evidence type="ECO:0000269" key="12">
    <source>
    </source>
</evidence>
<evidence type="ECO:0000269" key="13">
    <source>
    </source>
</evidence>
<evidence type="ECO:0000269" key="14">
    <source>
    </source>
</evidence>
<evidence type="ECO:0000269" key="15">
    <source>
    </source>
</evidence>
<evidence type="ECO:0000269" key="16">
    <source>
    </source>
</evidence>
<evidence type="ECO:0000269" key="17">
    <source ref="3"/>
</evidence>
<evidence type="ECO:0000305" key="18"/>
<evidence type="ECO:0000305" key="19">
    <source>
    </source>
</evidence>
<evidence type="ECO:0000312" key="20">
    <source>
        <dbReference type="HGNC" id="HGNC:18263"/>
    </source>
</evidence>
<evidence type="ECO:0007744" key="21">
    <source>
        <dbReference type="PDB" id="1YZT"/>
    </source>
</evidence>
<evidence type="ECO:0007744" key="22">
    <source>
        <dbReference type="PDB" id="1YZU"/>
    </source>
</evidence>
<evidence type="ECO:0007744" key="23">
    <source>
        <dbReference type="PDB" id="1Z08"/>
    </source>
</evidence>
<evidence type="ECO:0007744" key="24">
    <source>
        <dbReference type="PDB" id="1Z0I"/>
    </source>
</evidence>
<evidence type="ECO:0007744" key="25">
    <source>
    </source>
</evidence>
<evidence type="ECO:0007744" key="26">
    <source>
    </source>
</evidence>
<evidence type="ECO:0007744" key="27">
    <source>
    </source>
</evidence>
<evidence type="ECO:0007829" key="28">
    <source>
        <dbReference type="PDB" id="1Z08"/>
    </source>
</evidence>
<evidence type="ECO:0007829" key="29">
    <source>
        <dbReference type="PDB" id="1Z0I"/>
    </source>
</evidence>
<evidence type="ECO:0007829" key="30">
    <source>
        <dbReference type="PDB" id="2OT3"/>
    </source>
</evidence>
<keyword id="KW-0002">3D-structure</keyword>
<keyword id="KW-0007">Acetylation</keyword>
<keyword id="KW-0966">Cell projection</keyword>
<keyword id="KW-0968">Cytoplasmic vesicle</keyword>
<keyword id="KW-0903">Direct protein sequencing</keyword>
<keyword id="KW-0256">Endoplasmic reticulum</keyword>
<keyword id="KW-0967">Endosome</keyword>
<keyword id="KW-0333">Golgi apparatus</keyword>
<keyword id="KW-0342">GTP-binding</keyword>
<keyword id="KW-0378">Hydrolase</keyword>
<keyword id="KW-0449">Lipoprotein</keyword>
<keyword id="KW-0472">Membrane</keyword>
<keyword id="KW-0488">Methylation</keyword>
<keyword id="KW-0547">Nucleotide-binding</keyword>
<keyword id="KW-0636">Prenylation</keyword>
<keyword id="KW-0653">Protein transport</keyword>
<keyword id="KW-1267">Proteomics identification</keyword>
<keyword id="KW-1185">Reference proteome</keyword>
<keyword id="KW-0813">Transport</keyword>
<protein>
    <recommendedName>
        <fullName>Ras-related protein Rab-21</fullName>
        <ecNumber evidence="2">3.6.5.2</ecNumber>
    </recommendedName>
</protein>
<reference key="1">
    <citation type="journal article" date="2000" name="Eur. J. Cell Biol.">
        <title>Expression of Rab small GTPases in epithelial Caco-2 cells: Rab21 is an apically located GTP-binding protein in polarised intestinal epithelial cells.</title>
        <authorList>
            <person name="Opdam F.J.M."/>
            <person name="Kamps G."/>
            <person name="Croes H."/>
            <person name="van Bokhoven H."/>
            <person name="Ginsel L.A."/>
            <person name="Fransen J.A.M."/>
        </authorList>
    </citation>
    <scope>NUCLEOTIDE SEQUENCE [MRNA]</scope>
    <scope>SUBCELLULAR LOCATION</scope>
    <scope>TISSUE SPECIFICITY</scope>
    <source>
        <tissue>Colon carcinoma</tissue>
    </source>
</reference>
<reference key="2">
    <citation type="journal article" date="2004" name="Genome Res.">
        <title>The status, quality, and expansion of the NIH full-length cDNA project: the Mammalian Gene Collection (MGC).</title>
        <authorList>
            <consortium name="The MGC Project Team"/>
        </authorList>
    </citation>
    <scope>NUCLEOTIDE SEQUENCE [LARGE SCALE MRNA]</scope>
    <source>
        <tissue>Lymph</tissue>
        <tissue>Placenta</tissue>
    </source>
</reference>
<reference key="3">
    <citation type="submission" date="2005-06" db="UniProtKB">
        <authorList>
            <person name="Bienvenut W.V."/>
        </authorList>
    </citation>
    <scope>PROTEIN SEQUENCE OF 2-16; 48-59; 91-109 AND 141-157</scope>
    <scope>CLEAVAGE OF INITIATOR METHIONINE</scope>
    <scope>ACETYLATION AT ALA-2</scope>
    <scope>IDENTIFICATION BY MASS SPECTROMETRY</scope>
    <source>
        <tissue>B-cell lymphoma</tissue>
    </source>
</reference>
<reference key="4">
    <citation type="journal article" date="1995" name="DNA Res.">
        <title>Prediction of the coding sequences of unidentified human genes. III. The coding sequences of 40 new genes (KIAA0081-KIAA0120) deduced by analysis of cDNA clones from human cell line KG-1.</title>
        <authorList>
            <person name="Nagase T."/>
            <person name="Miyajima N."/>
            <person name="Tanaka A."/>
            <person name="Sazuka T."/>
            <person name="Seki N."/>
            <person name="Sato S."/>
            <person name="Tabata S."/>
            <person name="Ishikawa K."/>
            <person name="Kawarabayasi Y."/>
            <person name="Kotani H."/>
            <person name="Nomura N."/>
        </authorList>
    </citation>
    <scope>NUCLEOTIDE SEQUENCE [LARGE SCALE MRNA] OF 65-225</scope>
    <source>
        <tissue>Bone marrow</tissue>
    </source>
</reference>
<reference key="5">
    <citation type="journal article" date="2004" name="J. Cell Sci.">
        <title>A role for the small GTPase Rab21 in the early endocytic pathway.</title>
        <authorList>
            <person name="Simpson J.C."/>
            <person name="Griffiths G."/>
            <person name="Wessling-Resnick M."/>
            <person name="Fransen J.A.M."/>
            <person name="Bennett H."/>
            <person name="Jones A.T."/>
        </authorList>
    </citation>
    <scope>SUBCELLULAR LOCATION</scope>
    <scope>MUTAGENESIS OF THR-33 AND GLN-78</scope>
</reference>
<reference key="6">
    <citation type="journal article" date="2006" name="J. Cell Sci.">
        <title>Varp is a Rab21 guanine nucleotide exchange factor and regulates endosome dynamics.</title>
        <authorList>
            <person name="Zhang X."/>
            <person name="He X."/>
            <person name="Fu X.-Y."/>
            <person name="Chang Z."/>
        </authorList>
    </citation>
    <scope>INTERACTION WITH ANKRD27</scope>
    <scope>SUBCELLULAR LOCATION</scope>
    <scope>ACTIVITY REGULATION</scope>
</reference>
<reference key="7">
    <citation type="journal article" date="2008" name="Biochem. Biophys. Res. Commun.">
        <title>Varp interacts with Rab38 and functions as its potential effector.</title>
        <authorList>
            <person name="Wang F."/>
            <person name="Zhang H."/>
            <person name="Zhang X."/>
            <person name="Wang Y."/>
            <person name="Ren F."/>
            <person name="Zhang X."/>
            <person name="Zhai Y."/>
            <person name="Chang Z."/>
        </authorList>
    </citation>
    <scope>INTERACTION WITH ANKRD27</scope>
</reference>
<reference key="8">
    <citation type="journal article" date="2008" name="Dev. Cell">
        <title>Integrin trafficking regulated by Rab21 is necessary for cytokinesis.</title>
        <authorList>
            <person name="Pellinen T."/>
            <person name="Tuomi S."/>
            <person name="Arjonen A."/>
            <person name="Wolf M."/>
            <person name="Edgren H."/>
            <person name="Meyer H."/>
            <person name="Grosse R."/>
            <person name="Kitzing T."/>
            <person name="Rantala J.K."/>
            <person name="Kallioniemi O."/>
            <person name="Faessler R."/>
            <person name="Kallio M."/>
            <person name="Ivaska J."/>
        </authorList>
    </citation>
    <scope>FUNCTION</scope>
    <scope>SUBCELLULAR LOCATION</scope>
</reference>
<reference key="9">
    <citation type="journal article" date="2009" name="Anal. Chem.">
        <title>Lys-N and trypsin cover complementary parts of the phosphoproteome in a refined SCX-based approach.</title>
        <authorList>
            <person name="Gauci S."/>
            <person name="Helbig A.O."/>
            <person name="Slijper M."/>
            <person name="Krijgsveld J."/>
            <person name="Heck A.J."/>
            <person name="Mohammed S."/>
        </authorList>
    </citation>
    <scope>ACETYLATION [LARGE SCALE ANALYSIS] AT ALA-2</scope>
    <scope>CLEAVAGE OF INITIATOR METHIONINE [LARGE SCALE ANALYSIS]</scope>
    <scope>IDENTIFICATION BY MASS SPECTROMETRY [LARGE SCALE ANALYSIS]</scope>
</reference>
<reference key="10">
    <citation type="journal article" date="2009" name="EMBO Rep.">
        <title>Role of Varp, a Rab21 exchange factor and TI-VAMP/VAMP7 partner, in neurite growth.</title>
        <authorList>
            <person name="Burgo A."/>
            <person name="Sotirakis E."/>
            <person name="Simmler M.C."/>
            <person name="Verraes A."/>
            <person name="Chamot C."/>
            <person name="Simpson J.C."/>
            <person name="Lanzetti L."/>
            <person name="Proux-Gillardeaux V."/>
            <person name="Galli T."/>
        </authorList>
    </citation>
    <scope>SUBCELLULAR LOCATION</scope>
</reference>
<reference key="11">
    <citation type="journal article" date="2011" name="BMC Syst. Biol.">
        <title>Initial characterization of the human central proteome.</title>
        <authorList>
            <person name="Burkard T.R."/>
            <person name="Planyavsky M."/>
            <person name="Kaupe I."/>
            <person name="Breitwieser F.P."/>
            <person name="Buerckstuemmer T."/>
            <person name="Bennett K.L."/>
            <person name="Superti-Furga G."/>
            <person name="Colinge J."/>
        </authorList>
    </citation>
    <scope>IDENTIFICATION BY MASS SPECTROMETRY [LARGE SCALE ANALYSIS]</scope>
</reference>
<reference key="12">
    <citation type="journal article" date="2012" name="Proc. Natl. Acad. Sci. U.S.A.">
        <title>N-terminal acetylome analyses and functional insights of the N-terminal acetyltransferase NatB.</title>
        <authorList>
            <person name="Van Damme P."/>
            <person name="Lasa M."/>
            <person name="Polevoda B."/>
            <person name="Gazquez C."/>
            <person name="Elosegui-Artola A."/>
            <person name="Kim D.S."/>
            <person name="De Juan-Pardo E."/>
            <person name="Demeyer K."/>
            <person name="Hole K."/>
            <person name="Larrea E."/>
            <person name="Timmerman E."/>
            <person name="Prieto J."/>
            <person name="Arnesen T."/>
            <person name="Sherman F."/>
            <person name="Gevaert K."/>
            <person name="Aldabe R."/>
        </authorList>
    </citation>
    <scope>ACETYLATION [LARGE SCALE ANALYSIS] AT ALA-2</scope>
    <scope>CLEAVAGE OF INITIATOR METHIONINE [LARGE SCALE ANALYSIS]</scope>
    <scope>IDENTIFICATION BY MASS SPECTROMETRY [LARGE SCALE ANALYSIS]</scope>
</reference>
<reference key="13">
    <citation type="journal article" date="2015" name="EMBO Rep.">
        <title>Starvation-induced MTMR13 and RAB21 activity regulates VAMP8 to promote autophagosome-lysosome fusion.</title>
        <authorList>
            <person name="Jean S."/>
            <person name="Cox S."/>
            <person name="Nassari S."/>
            <person name="Kiger A.A."/>
        </authorList>
    </citation>
    <scope>FUNCTION</scope>
    <scope>INTERACTION WITH VAMP7 AND VAMP8</scope>
    <scope>SUBCELLULAR LOCATION</scope>
    <scope>MUTAGENESIS OF THR-33 AND GLN-78</scope>
</reference>
<reference key="14">
    <citation type="journal article" date="2015" name="Proteomics">
        <title>N-terminome analysis of the human mitochondrial proteome.</title>
        <authorList>
            <person name="Vaca Jacome A.S."/>
            <person name="Rabilloud T."/>
            <person name="Schaeffer-Reiss C."/>
            <person name="Rompais M."/>
            <person name="Ayoub D."/>
            <person name="Lane L."/>
            <person name="Bairoch A."/>
            <person name="Van Dorsselaer A."/>
            <person name="Carapito C."/>
        </authorList>
    </citation>
    <scope>ACETYLATION [LARGE SCALE ANALYSIS] AT ALA-2</scope>
    <scope>CLEAVAGE OF INITIATOR METHIONINE [LARGE SCALE ANALYSIS]</scope>
    <scope>IDENTIFICATION BY MASS SPECTROMETRY [LARGE SCALE ANALYSIS]</scope>
</reference>
<reference key="15">
    <citation type="journal article" date="2019" name="Biol. Open">
        <title>RAB21 interacts with TMED10 and modulates its localization and abundance.</title>
        <authorList>
            <person name="Del Olmo T."/>
            <person name="Lacarriere-Keita C."/>
            <person name="Normandin C."/>
            <person name="Jean D."/>
            <person name="Boisvert F.M."/>
            <person name="Jean S."/>
        </authorList>
    </citation>
    <scope>FUNCTION</scope>
    <scope>INTERACTION WITH TMED10</scope>
    <scope>MUTAGENESIS OF THR-33 AND GLN-78</scope>
</reference>
<reference evidence="21 22 23 24" key="16">
    <citation type="journal article" date="2005" name="Nature">
        <title>Structural basis of family-wide Rab GTPase recognition by rabenosyn-5.</title>
        <authorList>
            <person name="Eathiraj S."/>
            <person name="Pan X."/>
            <person name="Ritacco C."/>
            <person name="Lambright D.G."/>
        </authorList>
    </citation>
    <scope>X-RAY CRYSTALLOGRAPHY (1.8 ANGSTROMS) OF 16-183 IN COMPLEX WITH MG(2+); GTP ANALOG AND GDP</scope>
    <scope>COFACTOR</scope>
</reference>
<reference key="17">
    <citation type="journal article" date="2007" name="Nat. Struct. Mol. Biol.">
        <title>Structural basis for Rab GTPase activation by VPS9 domain exchange factors.</title>
        <authorList>
            <person name="Delprato A."/>
            <person name="Lambright D.G."/>
        </authorList>
    </citation>
    <scope>X-RAY CRYSTALLOGRAPHY (2.1 ANGSTROMS) OF 16-183 IN COMPLEX WITH RABGEF1</scope>
    <scope>ACTIVITY REGULATION</scope>
</reference>
<sequence>MAAAGGGGGGAAAAGRAYSFKVVLLGEGCVGKTSLVLRYCENKFNDKHITTLQASFLTKKLNIGGKRVNLAIWDTAGQERFHALGPIYYRDSNGAILVYDITDEDSFQKVKNWVKELRKMLGNEICLCIVGNKIDLEKERHVSIQEAESYAESVGAKHYHTSAKQNKGIEELFLDLCKRMIETAQVDERAKGNGSSQPGTARRGVQIIDDEPQAQTSGGGCCSSG</sequence>
<dbReference type="EC" id="3.6.5.2" evidence="2"/>
<dbReference type="EMBL" id="AF091035">
    <property type="protein sequence ID" value="AAF00048.1"/>
    <property type="molecule type" value="mRNA"/>
</dbReference>
<dbReference type="EMBL" id="BC021901">
    <property type="protein sequence ID" value="AAH21901.1"/>
    <property type="molecule type" value="mRNA"/>
</dbReference>
<dbReference type="EMBL" id="BC092475">
    <property type="protein sequence ID" value="AAH92475.1"/>
    <property type="molecule type" value="mRNA"/>
</dbReference>
<dbReference type="EMBL" id="D42087">
    <property type="protein sequence ID" value="BAA07682.1"/>
    <property type="molecule type" value="mRNA"/>
</dbReference>
<dbReference type="CCDS" id="CCDS9003.1"/>
<dbReference type="RefSeq" id="NP_055814.1">
    <property type="nucleotide sequence ID" value="NM_014999.4"/>
</dbReference>
<dbReference type="PDB" id="1YZT">
    <property type="method" value="X-ray"/>
    <property type="resolution" value="2.05 A"/>
    <property type="chains" value="A/B=16-183"/>
</dbReference>
<dbReference type="PDB" id="1YZU">
    <property type="method" value="X-ray"/>
    <property type="resolution" value="2.50 A"/>
    <property type="chains" value="A/B=16-183"/>
</dbReference>
<dbReference type="PDB" id="1Z08">
    <property type="method" value="X-ray"/>
    <property type="resolution" value="1.80 A"/>
    <property type="chains" value="A/B/C/D=16-183"/>
</dbReference>
<dbReference type="PDB" id="1Z0I">
    <property type="method" value="X-ray"/>
    <property type="resolution" value="2.33 A"/>
    <property type="chains" value="A=16-183"/>
</dbReference>
<dbReference type="PDB" id="2OT3">
    <property type="method" value="X-ray"/>
    <property type="resolution" value="2.10 A"/>
    <property type="chains" value="B=16-183"/>
</dbReference>
<dbReference type="PDBsum" id="1YZT"/>
<dbReference type="PDBsum" id="1YZU"/>
<dbReference type="PDBsum" id="1Z08"/>
<dbReference type="PDBsum" id="1Z0I"/>
<dbReference type="PDBsum" id="2OT3"/>
<dbReference type="SMR" id="Q9UL25"/>
<dbReference type="BioGRID" id="116653">
    <property type="interactions" value="145"/>
</dbReference>
<dbReference type="DIP" id="DIP-29349N"/>
<dbReference type="FunCoup" id="Q9UL25">
    <property type="interactions" value="2453"/>
</dbReference>
<dbReference type="IntAct" id="Q9UL25">
    <property type="interactions" value="80"/>
</dbReference>
<dbReference type="MINT" id="Q9UL25"/>
<dbReference type="STRING" id="9606.ENSP00000261263"/>
<dbReference type="CarbonylDB" id="Q9UL25"/>
<dbReference type="GlyGen" id="Q9UL25">
    <property type="glycosylation" value="2 sites, 1 O-linked glycan (1 site)"/>
</dbReference>
<dbReference type="iPTMnet" id="Q9UL25"/>
<dbReference type="PhosphoSitePlus" id="Q9UL25"/>
<dbReference type="SwissPalm" id="Q9UL25"/>
<dbReference type="BioMuta" id="RAB21"/>
<dbReference type="DMDM" id="13633613"/>
<dbReference type="jPOST" id="Q9UL25"/>
<dbReference type="MassIVE" id="Q9UL25"/>
<dbReference type="PaxDb" id="9606-ENSP00000261263"/>
<dbReference type="PeptideAtlas" id="Q9UL25"/>
<dbReference type="PRIDE" id="Q9UL25"/>
<dbReference type="ProteomicsDB" id="84934"/>
<dbReference type="Pumba" id="Q9UL25"/>
<dbReference type="Antibodypedia" id="1484">
    <property type="antibodies" value="424 antibodies from 30 providers"/>
</dbReference>
<dbReference type="DNASU" id="23011"/>
<dbReference type="Ensembl" id="ENST00000261263.5">
    <property type="protein sequence ID" value="ENSP00000261263.3"/>
    <property type="gene ID" value="ENSG00000080371.6"/>
</dbReference>
<dbReference type="GeneID" id="23011"/>
<dbReference type="KEGG" id="hsa:23011"/>
<dbReference type="MANE-Select" id="ENST00000261263.5">
    <property type="protein sequence ID" value="ENSP00000261263.3"/>
    <property type="RefSeq nucleotide sequence ID" value="NM_014999.4"/>
    <property type="RefSeq protein sequence ID" value="NP_055814.1"/>
</dbReference>
<dbReference type="UCSC" id="uc001swt.4">
    <property type="organism name" value="human"/>
</dbReference>
<dbReference type="AGR" id="HGNC:18263"/>
<dbReference type="CTD" id="23011"/>
<dbReference type="DisGeNET" id="23011"/>
<dbReference type="GeneCards" id="RAB21"/>
<dbReference type="HGNC" id="HGNC:18263">
    <property type="gene designation" value="RAB21"/>
</dbReference>
<dbReference type="HPA" id="ENSG00000080371">
    <property type="expression patterns" value="Low tissue specificity"/>
</dbReference>
<dbReference type="MIM" id="612398">
    <property type="type" value="gene"/>
</dbReference>
<dbReference type="neXtProt" id="NX_Q9UL25"/>
<dbReference type="OpenTargets" id="ENSG00000080371"/>
<dbReference type="PharmGKB" id="PA34111"/>
<dbReference type="VEuPathDB" id="HostDB:ENSG00000080371"/>
<dbReference type="eggNOG" id="KOG0088">
    <property type="taxonomic scope" value="Eukaryota"/>
</dbReference>
<dbReference type="GeneTree" id="ENSGT00940000156786"/>
<dbReference type="HOGENOM" id="CLU_041217_10_2_1"/>
<dbReference type="InParanoid" id="Q9UL25"/>
<dbReference type="OMA" id="NDEQHRN"/>
<dbReference type="OrthoDB" id="63533at2759"/>
<dbReference type="PAN-GO" id="Q9UL25">
    <property type="GO annotations" value="4 GO annotations based on evolutionary models"/>
</dbReference>
<dbReference type="PhylomeDB" id="Q9UL25"/>
<dbReference type="TreeFam" id="TF300199"/>
<dbReference type="BRENDA" id="3.6.5.2">
    <property type="organism ID" value="2681"/>
</dbReference>
<dbReference type="PathwayCommons" id="Q9UL25"/>
<dbReference type="Reactome" id="R-HSA-8873719">
    <property type="pathway name" value="RAB geranylgeranylation"/>
</dbReference>
<dbReference type="Reactome" id="R-HSA-8876198">
    <property type="pathway name" value="RAB GEFs exchange GTP for GDP on RABs"/>
</dbReference>
<dbReference type="SignaLink" id="Q9UL25"/>
<dbReference type="SIGNOR" id="Q9UL25"/>
<dbReference type="BioGRID-ORCS" id="23011">
    <property type="hits" value="34 hits in 1163 CRISPR screens"/>
</dbReference>
<dbReference type="CD-CODE" id="FB4E32DD">
    <property type="entry name" value="Presynaptic clusters and postsynaptic densities"/>
</dbReference>
<dbReference type="ChiTaRS" id="RAB21">
    <property type="organism name" value="human"/>
</dbReference>
<dbReference type="EvolutionaryTrace" id="Q9UL25"/>
<dbReference type="GeneWiki" id="RAB21"/>
<dbReference type="GenomeRNAi" id="23011"/>
<dbReference type="Pharos" id="Q9UL25">
    <property type="development level" value="Tbio"/>
</dbReference>
<dbReference type="PRO" id="PR:Q9UL25"/>
<dbReference type="Proteomes" id="UP000005640">
    <property type="component" value="Chromosome 12"/>
</dbReference>
<dbReference type="RNAct" id="Q9UL25">
    <property type="molecule type" value="protein"/>
</dbReference>
<dbReference type="Bgee" id="ENSG00000080371">
    <property type="expression patterns" value="Expressed in skeletal muscle tissue of rectus abdominis and 215 other cell types or tissues"/>
</dbReference>
<dbReference type="ExpressionAtlas" id="Q9UL25">
    <property type="expression patterns" value="baseline and differential"/>
</dbReference>
<dbReference type="GO" id="GO:1904115">
    <property type="term" value="C:axon cytoplasm"/>
    <property type="evidence" value="ECO:0007669"/>
    <property type="project" value="GOC"/>
</dbReference>
<dbReference type="GO" id="GO:0032154">
    <property type="term" value="C:cleavage furrow"/>
    <property type="evidence" value="ECO:0007669"/>
    <property type="project" value="UniProtKB-SubCell"/>
</dbReference>
<dbReference type="GO" id="GO:0098559">
    <property type="term" value="C:cytoplasmic side of early endosome membrane"/>
    <property type="evidence" value="ECO:0000314"/>
    <property type="project" value="UniProtKB"/>
</dbReference>
<dbReference type="GO" id="GO:0009898">
    <property type="term" value="C:cytoplasmic side of plasma membrane"/>
    <property type="evidence" value="ECO:0000314"/>
    <property type="project" value="UniProtKB"/>
</dbReference>
<dbReference type="GO" id="GO:0005829">
    <property type="term" value="C:cytosol"/>
    <property type="evidence" value="ECO:0000304"/>
    <property type="project" value="Reactome"/>
</dbReference>
<dbReference type="GO" id="GO:0005769">
    <property type="term" value="C:early endosome"/>
    <property type="evidence" value="ECO:0000318"/>
    <property type="project" value="GO_Central"/>
</dbReference>
<dbReference type="GO" id="GO:0031901">
    <property type="term" value="C:early endosome membrane"/>
    <property type="evidence" value="ECO:0000304"/>
    <property type="project" value="Reactome"/>
</dbReference>
<dbReference type="GO" id="GO:0012505">
    <property type="term" value="C:endomembrane system"/>
    <property type="evidence" value="ECO:0000318"/>
    <property type="project" value="GO_Central"/>
</dbReference>
<dbReference type="GO" id="GO:0005789">
    <property type="term" value="C:endoplasmic reticulum membrane"/>
    <property type="evidence" value="ECO:0007669"/>
    <property type="project" value="UniProtKB-SubCell"/>
</dbReference>
<dbReference type="GO" id="GO:0005768">
    <property type="term" value="C:endosome"/>
    <property type="evidence" value="ECO:0000314"/>
    <property type="project" value="LIFEdb"/>
</dbReference>
<dbReference type="GO" id="GO:0070062">
    <property type="term" value="C:extracellular exosome"/>
    <property type="evidence" value="ECO:0007005"/>
    <property type="project" value="UniProtKB"/>
</dbReference>
<dbReference type="GO" id="GO:0005925">
    <property type="term" value="C:focal adhesion"/>
    <property type="evidence" value="ECO:0007005"/>
    <property type="project" value="UniProtKB"/>
</dbReference>
<dbReference type="GO" id="GO:0032580">
    <property type="term" value="C:Golgi cisterna membrane"/>
    <property type="evidence" value="ECO:0000314"/>
    <property type="project" value="UniProtKB"/>
</dbReference>
<dbReference type="GO" id="GO:0000139">
    <property type="term" value="C:Golgi membrane"/>
    <property type="evidence" value="ECO:0007669"/>
    <property type="project" value="UniProtKB-SubCell"/>
</dbReference>
<dbReference type="GO" id="GO:0045202">
    <property type="term" value="C:synapse"/>
    <property type="evidence" value="ECO:0007669"/>
    <property type="project" value="Ensembl"/>
</dbReference>
<dbReference type="GO" id="GO:0005802">
    <property type="term" value="C:trans-Golgi network"/>
    <property type="evidence" value="ECO:0000314"/>
    <property type="project" value="UniProtKB"/>
</dbReference>
<dbReference type="GO" id="GO:0012506">
    <property type="term" value="C:vesicle membrane"/>
    <property type="evidence" value="ECO:0000314"/>
    <property type="project" value="UniProtKB"/>
</dbReference>
<dbReference type="GO" id="GO:0019003">
    <property type="term" value="F:GDP binding"/>
    <property type="evidence" value="ECO:0000314"/>
    <property type="project" value="UniProtKB"/>
</dbReference>
<dbReference type="GO" id="GO:0005525">
    <property type="term" value="F:GTP binding"/>
    <property type="evidence" value="ECO:0000314"/>
    <property type="project" value="UniProtKB"/>
</dbReference>
<dbReference type="GO" id="GO:0003924">
    <property type="term" value="F:GTPase activity"/>
    <property type="evidence" value="ECO:0000314"/>
    <property type="project" value="UniProtKB"/>
</dbReference>
<dbReference type="GO" id="GO:0008089">
    <property type="term" value="P:anterograde axonal transport"/>
    <property type="evidence" value="ECO:0000314"/>
    <property type="project" value="SynGO"/>
</dbReference>
<dbReference type="GO" id="GO:0006886">
    <property type="term" value="P:intracellular protein transport"/>
    <property type="evidence" value="ECO:0000318"/>
    <property type="project" value="GO_Central"/>
</dbReference>
<dbReference type="GO" id="GO:0050775">
    <property type="term" value="P:positive regulation of dendrite morphogenesis"/>
    <property type="evidence" value="ECO:0007669"/>
    <property type="project" value="Ensembl"/>
</dbReference>
<dbReference type="GO" id="GO:2000643">
    <property type="term" value="P:positive regulation of early endosome to late endosome transport"/>
    <property type="evidence" value="ECO:0000315"/>
    <property type="project" value="UniProtKB"/>
</dbReference>
<dbReference type="GO" id="GO:0048260">
    <property type="term" value="P:positive regulation of receptor-mediated endocytosis"/>
    <property type="evidence" value="ECO:0000315"/>
    <property type="project" value="UniProtKB"/>
</dbReference>
<dbReference type="GO" id="GO:0050821">
    <property type="term" value="P:protein stabilization"/>
    <property type="evidence" value="ECO:0000315"/>
    <property type="project" value="UniProtKB"/>
</dbReference>
<dbReference type="GO" id="GO:0032482">
    <property type="term" value="P:Rab protein signal transduction"/>
    <property type="evidence" value="ECO:0007669"/>
    <property type="project" value="InterPro"/>
</dbReference>
<dbReference type="GO" id="GO:0030516">
    <property type="term" value="P:regulation of axon extension"/>
    <property type="evidence" value="ECO:0007669"/>
    <property type="project" value="Ensembl"/>
</dbReference>
<dbReference type="GO" id="GO:0017157">
    <property type="term" value="P:regulation of exocytosis"/>
    <property type="evidence" value="ECO:0000314"/>
    <property type="project" value="UniProtKB"/>
</dbReference>
<dbReference type="CDD" id="cd04123">
    <property type="entry name" value="Rab21"/>
    <property type="match status" value="1"/>
</dbReference>
<dbReference type="FunFam" id="3.40.50.300:FF:000550">
    <property type="entry name" value="ras-related protein Rab-21"/>
    <property type="match status" value="1"/>
</dbReference>
<dbReference type="Gene3D" id="3.40.50.300">
    <property type="entry name" value="P-loop containing nucleotide triphosphate hydrolases"/>
    <property type="match status" value="1"/>
</dbReference>
<dbReference type="InterPro" id="IPR027417">
    <property type="entry name" value="P-loop_NTPase"/>
</dbReference>
<dbReference type="InterPro" id="IPR041833">
    <property type="entry name" value="Rab21"/>
</dbReference>
<dbReference type="InterPro" id="IPR005225">
    <property type="entry name" value="Small_GTP-bd"/>
</dbReference>
<dbReference type="InterPro" id="IPR001806">
    <property type="entry name" value="Small_GTPase"/>
</dbReference>
<dbReference type="NCBIfam" id="TIGR00231">
    <property type="entry name" value="small_GTP"/>
    <property type="match status" value="1"/>
</dbReference>
<dbReference type="PANTHER" id="PTHR47978">
    <property type="match status" value="1"/>
</dbReference>
<dbReference type="Pfam" id="PF00071">
    <property type="entry name" value="Ras"/>
    <property type="match status" value="1"/>
</dbReference>
<dbReference type="PRINTS" id="PR00449">
    <property type="entry name" value="RASTRNSFRMNG"/>
</dbReference>
<dbReference type="SMART" id="SM00175">
    <property type="entry name" value="RAB"/>
    <property type="match status" value="1"/>
</dbReference>
<dbReference type="SMART" id="SM00176">
    <property type="entry name" value="RAN"/>
    <property type="match status" value="1"/>
</dbReference>
<dbReference type="SMART" id="SM00173">
    <property type="entry name" value="RAS"/>
    <property type="match status" value="1"/>
</dbReference>
<dbReference type="SMART" id="SM00174">
    <property type="entry name" value="RHO"/>
    <property type="match status" value="1"/>
</dbReference>
<dbReference type="SUPFAM" id="SSF52540">
    <property type="entry name" value="P-loop containing nucleoside triphosphate hydrolases"/>
    <property type="match status" value="1"/>
</dbReference>
<dbReference type="PROSITE" id="PS51419">
    <property type="entry name" value="RAB"/>
    <property type="match status" value="1"/>
</dbReference>
<accession>Q9UL25</accession>
<accession>Q14466</accession>
<accession>Q569H3</accession>
<feature type="initiator methionine" description="Removed" evidence="17 25 26 27">
    <location>
        <position position="1"/>
    </location>
</feature>
<feature type="chain" id="PRO_0000121205" description="Ras-related protein Rab-21">
    <location>
        <begin position="2"/>
        <end position="222"/>
    </location>
</feature>
<feature type="propeptide" id="PRO_0000370768" description="Removed in mature form" evidence="5">
    <location>
        <begin position="223"/>
        <end position="225"/>
    </location>
</feature>
<feature type="region of interest" description="Disordered" evidence="6">
    <location>
        <begin position="188"/>
        <end position="225"/>
    </location>
</feature>
<feature type="short sequence motif" description="Switch 1" evidence="9 21 22 23 24">
    <location>
        <begin position="43"/>
        <end position="56"/>
    </location>
</feature>
<feature type="short sequence motif" description="Switch 2" evidence="9 21 22 23 24">
    <location>
        <begin position="76"/>
        <end position="94"/>
    </location>
</feature>
<feature type="binding site" evidence="19 21 22 23">
    <location>
        <position position="28"/>
    </location>
    <ligand>
        <name>GTP</name>
        <dbReference type="ChEBI" id="CHEBI:37565"/>
    </ligand>
</feature>
<feature type="binding site" evidence="19 21 22 23">
    <location>
        <position position="31"/>
    </location>
    <ligand>
        <name>GTP</name>
        <dbReference type="ChEBI" id="CHEBI:37565"/>
    </ligand>
</feature>
<feature type="binding site" evidence="19 21 22 23">
    <location>
        <position position="32"/>
    </location>
    <ligand>
        <name>GTP</name>
        <dbReference type="ChEBI" id="CHEBI:37565"/>
    </ligand>
</feature>
<feature type="binding site" evidence="19 21 22 23">
    <location>
        <position position="33"/>
    </location>
    <ligand>
        <name>GTP</name>
        <dbReference type="ChEBI" id="CHEBI:37565"/>
    </ligand>
</feature>
<feature type="binding site" evidence="9 21 22 23 24">
    <location>
        <position position="33"/>
    </location>
    <ligand>
        <name>Mg(2+)</name>
        <dbReference type="ChEBI" id="CHEBI:18420"/>
    </ligand>
</feature>
<feature type="binding site" evidence="19 21 22 23">
    <location>
        <position position="34"/>
    </location>
    <ligand>
        <name>GTP</name>
        <dbReference type="ChEBI" id="CHEBI:37565"/>
    </ligand>
</feature>
<feature type="binding site" evidence="19 21 22 23">
    <location>
        <position position="45"/>
    </location>
    <ligand>
        <name>GTP</name>
        <dbReference type="ChEBI" id="CHEBI:37565"/>
    </ligand>
</feature>
<feature type="binding site" evidence="19 21 22 23">
    <location>
        <position position="46"/>
    </location>
    <ligand>
        <name>GTP</name>
        <dbReference type="ChEBI" id="CHEBI:37565"/>
    </ligand>
</feature>
<feature type="binding site" evidence="19 21 22 23">
    <location>
        <position position="48"/>
    </location>
    <ligand>
        <name>GTP</name>
        <dbReference type="ChEBI" id="CHEBI:37565"/>
    </ligand>
</feature>
<feature type="binding site" evidence="19 21">
    <location>
        <position position="50"/>
    </location>
    <ligand>
        <name>GTP</name>
        <dbReference type="ChEBI" id="CHEBI:37565"/>
    </ligand>
</feature>
<feature type="binding site" evidence="19 21 22 23">
    <location>
        <position position="51"/>
    </location>
    <ligand>
        <name>GTP</name>
        <dbReference type="ChEBI" id="CHEBI:37565"/>
    </ligand>
</feature>
<feature type="binding site" evidence="9 21 22 23">
    <location>
        <position position="51"/>
    </location>
    <ligand>
        <name>Mg(2+)</name>
        <dbReference type="ChEBI" id="CHEBI:18420"/>
    </ligand>
</feature>
<feature type="binding site" evidence="9 21 24">
    <location>
        <position position="74"/>
    </location>
    <ligand>
        <name>Mg(2+)</name>
        <dbReference type="ChEBI" id="CHEBI:18420"/>
    </ligand>
</feature>
<feature type="binding site" evidence="19 23">
    <location>
        <position position="77"/>
    </location>
    <ligand>
        <name>GTP</name>
        <dbReference type="ChEBI" id="CHEBI:37565"/>
    </ligand>
</feature>
<feature type="binding site" evidence="19 21 22 23">
    <location>
        <position position="132"/>
    </location>
    <ligand>
        <name>GTP</name>
        <dbReference type="ChEBI" id="CHEBI:37565"/>
    </ligand>
</feature>
<feature type="binding site" evidence="19 21 22">
    <location>
        <position position="133"/>
    </location>
    <ligand>
        <name>GTP</name>
        <dbReference type="ChEBI" id="CHEBI:37565"/>
    </ligand>
</feature>
<feature type="binding site" evidence="19 21 22 23">
    <location>
        <position position="135"/>
    </location>
    <ligand>
        <name>GTP</name>
        <dbReference type="ChEBI" id="CHEBI:37565"/>
    </ligand>
</feature>
<feature type="binding site" evidence="19 21 22 23">
    <location>
        <position position="163"/>
    </location>
    <ligand>
        <name>GTP</name>
        <dbReference type="ChEBI" id="CHEBI:37565"/>
    </ligand>
</feature>
<feature type="binding site" evidence="19 21 22 23">
    <location>
        <position position="164"/>
    </location>
    <ligand>
        <name>GTP</name>
        <dbReference type="ChEBI" id="CHEBI:37565"/>
    </ligand>
</feature>
<feature type="modified residue" description="N-acetylalanine" evidence="17 25 26 27">
    <location>
        <position position="2"/>
    </location>
</feature>
<feature type="modified residue" description="Cysteine methyl ester" evidence="5">
    <location>
        <position position="222"/>
    </location>
</feature>
<feature type="lipid moiety-binding region" description="S-geranylgeranyl cysteine" evidence="1">
    <location>
        <position position="221"/>
    </location>
</feature>
<feature type="lipid moiety-binding region" description="S-geranylgeranyl cysteine" evidence="1">
    <location>
        <position position="222"/>
    </location>
</feature>
<feature type="mutagenesis site" description="Defects in GTP-binding. Abolishes the interaction with VAMP8 in response to starvation. Abolishes the interaction with TMED10." evidence="8 15 16">
    <original>T</original>
    <variation>N</variation>
    <location>
        <position position="33"/>
    </location>
</feature>
<feature type="mutagenesis site" description="Defects in GTP hydrolysis. Does not affect the interaction with VAMP8 in response to starvation. Does not affect the interaction with TMED10." evidence="8 16">
    <original>Q</original>
    <variation>L</variation>
    <location>
        <position position="78"/>
    </location>
</feature>
<feature type="strand" evidence="28">
    <location>
        <begin position="18"/>
        <end position="25"/>
    </location>
</feature>
<feature type="helix" evidence="30">
    <location>
        <begin position="28"/>
        <end position="30"/>
    </location>
</feature>
<feature type="helix" evidence="28">
    <location>
        <begin position="32"/>
        <end position="41"/>
    </location>
</feature>
<feature type="strand" evidence="29">
    <location>
        <begin position="46"/>
        <end position="48"/>
    </location>
</feature>
<feature type="strand" evidence="28">
    <location>
        <begin position="55"/>
        <end position="65"/>
    </location>
</feature>
<feature type="strand" evidence="28">
    <location>
        <begin position="67"/>
        <end position="74"/>
    </location>
</feature>
<feature type="helix" evidence="28">
    <location>
        <begin position="79"/>
        <end position="83"/>
    </location>
</feature>
<feature type="helix" evidence="30">
    <location>
        <begin position="85"/>
        <end position="89"/>
    </location>
</feature>
<feature type="strand" evidence="28">
    <location>
        <begin position="93"/>
        <end position="100"/>
    </location>
</feature>
<feature type="helix" evidence="28">
    <location>
        <begin position="104"/>
        <end position="121"/>
    </location>
</feature>
<feature type="helix" evidence="28">
    <location>
        <begin position="122"/>
        <end position="124"/>
    </location>
</feature>
<feature type="strand" evidence="28">
    <location>
        <begin position="125"/>
        <end position="132"/>
    </location>
</feature>
<feature type="helix" evidence="28">
    <location>
        <begin position="134"/>
        <end position="139"/>
    </location>
</feature>
<feature type="helix" evidence="28">
    <location>
        <begin position="144"/>
        <end position="153"/>
    </location>
</feature>
<feature type="strand" evidence="28">
    <location>
        <begin position="157"/>
        <end position="162"/>
    </location>
</feature>
<feature type="turn" evidence="28">
    <location>
        <begin position="163"/>
        <end position="166"/>
    </location>
</feature>
<feature type="helix" evidence="28">
    <location>
        <begin position="169"/>
        <end position="181"/>
    </location>
</feature>